<evidence type="ECO:0000250" key="1"/>
<evidence type="ECO:0000255" key="2"/>
<evidence type="ECO:0000255" key="3">
    <source>
        <dbReference type="PROSITE-ProRule" id="PRU00192"/>
    </source>
</evidence>
<evidence type="ECO:0000256" key="4">
    <source>
        <dbReference type="SAM" id="MobiDB-lite"/>
    </source>
</evidence>
<evidence type="ECO:0000269" key="5">
    <source>
    </source>
</evidence>
<evidence type="ECO:0000305" key="6"/>
<dbReference type="EMBL" id="GU980762">
    <property type="protein sequence ID" value="ADF81057.1"/>
    <property type="molecule type" value="Genomic_DNA"/>
</dbReference>
<dbReference type="SMR" id="D6PVB4"/>
<dbReference type="GlyCosmos" id="D6PVB4">
    <property type="glycosylation" value="1 site, No reported glycans"/>
</dbReference>
<dbReference type="VEuPathDB" id="FungiDB:BTJ68_04482"/>
<dbReference type="OrthoDB" id="5983572at2759"/>
<dbReference type="GO" id="GO:0005886">
    <property type="term" value="C:plasma membrane"/>
    <property type="evidence" value="ECO:0007669"/>
    <property type="project" value="UniProtKB-SubCell"/>
</dbReference>
<dbReference type="GO" id="GO:0030833">
    <property type="term" value="P:regulation of actin filament polymerization"/>
    <property type="evidence" value="ECO:0007669"/>
    <property type="project" value="TreeGrafter"/>
</dbReference>
<dbReference type="CDD" id="cd11855">
    <property type="entry name" value="SH3_Sho1p"/>
    <property type="match status" value="1"/>
</dbReference>
<dbReference type="FunFam" id="2.30.30.40:FF:000213">
    <property type="entry name" value="High osmolarity signaling protein SHO1"/>
    <property type="match status" value="1"/>
</dbReference>
<dbReference type="Gene3D" id="2.30.30.40">
    <property type="entry name" value="SH3 Domains"/>
    <property type="match status" value="1"/>
</dbReference>
<dbReference type="InterPro" id="IPR036028">
    <property type="entry name" value="SH3-like_dom_sf"/>
</dbReference>
<dbReference type="InterPro" id="IPR001452">
    <property type="entry name" value="SH3_domain"/>
</dbReference>
<dbReference type="InterPro" id="IPR035522">
    <property type="entry name" value="Sho1_SH3"/>
</dbReference>
<dbReference type="PANTHER" id="PTHR15735">
    <property type="entry name" value="FCH AND DOUBLE SH3 DOMAINS PROTEIN"/>
    <property type="match status" value="1"/>
</dbReference>
<dbReference type="PANTHER" id="PTHR15735:SF20">
    <property type="entry name" value="HIGH OSMOLARITY SIGNALING PROTEIN SHO1"/>
    <property type="match status" value="1"/>
</dbReference>
<dbReference type="Pfam" id="PF00018">
    <property type="entry name" value="SH3_1"/>
    <property type="match status" value="1"/>
</dbReference>
<dbReference type="PRINTS" id="PR00452">
    <property type="entry name" value="SH3DOMAIN"/>
</dbReference>
<dbReference type="SMART" id="SM00326">
    <property type="entry name" value="SH3"/>
    <property type="match status" value="1"/>
</dbReference>
<dbReference type="SUPFAM" id="SSF50044">
    <property type="entry name" value="SH3-domain"/>
    <property type="match status" value="1"/>
</dbReference>
<dbReference type="PROSITE" id="PS50002">
    <property type="entry name" value="SH3"/>
    <property type="match status" value="1"/>
</dbReference>
<protein>
    <recommendedName>
        <fullName>High osmolarity signaling protein SHO1A</fullName>
    </recommendedName>
    <alternativeName>
        <fullName>Osmosensor SHO1A</fullName>
    </alternativeName>
</protein>
<reference key="1">
    <citation type="journal article" date="2011" name="Fungal Genet. Biol.">
        <title>Identification and characterization of putative osmosensors, HwSho1A and HwSho1B, from the extremely halotolerant black yeast Hortaea werneckii.</title>
        <authorList>
            <person name="Fettich M."/>
            <person name="Lenassi M."/>
            <person name="Veranic P."/>
            <person name="Gunde-Cimerman N."/>
            <person name="Plemenitas A."/>
        </authorList>
    </citation>
    <scope>NUCLEOTIDE SEQUENCE [GENOMIC DNA]</scope>
    <scope>SUBCELLULAR LOCATION</scope>
    <scope>FUNCTION</scope>
    <source>
        <strain>MZKI B-736 / CBS 100457</strain>
    </source>
</reference>
<sequence>MDYNNNRYGGGGGGSKFNLGHIVGDPFSLATIAIATAGWLIAFVSSIIANIDQEYPNYSWWALAYMFFVILGVTFAVAANAVYTYHVAMVGFLAAGLVFTTSSVNSLIYWSDKAKQAAAAGFILLSMVSIVWIFYFGSQPTASHRQTIDSFALHKDHAPSRASRHMTQSYRPETTHSAQHPQMYNSSQLAGFETSSPVTGYPGGAAGATKRESASAFPPPGQGGNFSNNQQPNPITSQNNPQNQHQQPQDLTSPSTTQQPTEYPYRAKAIYSYEANPDDANEISFNKHEILEVSDVSGRWWQAKKENGETGIAPSNYLILL</sequence>
<comment type="function">
    <text evidence="5">Plasma membrane osmosensor that activates the high osmolarity glycerol (HOG) MAPK signaling pathway in response to high osmolarity.</text>
</comment>
<comment type="subunit">
    <text evidence="1">Forms homooligomers.</text>
</comment>
<comment type="subcellular location">
    <subcellularLocation>
        <location evidence="5">Cell membrane</location>
        <topology evidence="5">Multi-pass membrane protein</topology>
    </subcellularLocation>
    <text>Localizes at sites of polarized cell growth.</text>
</comment>
<comment type="similarity">
    <text evidence="6">Belongs to the SHO1 family.</text>
</comment>
<accession>D6PVB4</accession>
<name>SHO1A_HORWE</name>
<proteinExistence type="inferred from homology"/>
<gene>
    <name type="primary">SHO1A</name>
</gene>
<feature type="chain" id="PRO_0000410376" description="High osmolarity signaling protein SHO1A">
    <location>
        <begin position="1"/>
        <end position="321"/>
    </location>
</feature>
<feature type="topological domain" description="Cytoplasmic" evidence="2">
    <location>
        <begin position="1"/>
        <end position="28"/>
    </location>
</feature>
<feature type="transmembrane region" description="Helical" evidence="2">
    <location>
        <begin position="29"/>
        <end position="49"/>
    </location>
</feature>
<feature type="topological domain" description="Extracellular" evidence="2">
    <location>
        <begin position="50"/>
        <end position="58"/>
    </location>
</feature>
<feature type="transmembrane region" description="Helical" evidence="2">
    <location>
        <begin position="59"/>
        <end position="79"/>
    </location>
</feature>
<feature type="topological domain" description="Cytoplasmic" evidence="2">
    <location>
        <position position="80"/>
    </location>
</feature>
<feature type="transmembrane region" description="Helical" evidence="2">
    <location>
        <begin position="81"/>
        <end position="101"/>
    </location>
</feature>
<feature type="topological domain" description="Extracellular" evidence="2">
    <location>
        <begin position="102"/>
        <end position="116"/>
    </location>
</feature>
<feature type="transmembrane region" description="Helical" evidence="2">
    <location>
        <begin position="117"/>
        <end position="137"/>
    </location>
</feature>
<feature type="topological domain" description="Cytoplasmic" evidence="2">
    <location>
        <begin position="138"/>
        <end position="321"/>
    </location>
</feature>
<feature type="domain" description="SH3" evidence="3">
    <location>
        <begin position="262"/>
        <end position="321"/>
    </location>
</feature>
<feature type="region of interest" description="Disordered" evidence="4">
    <location>
        <begin position="155"/>
        <end position="181"/>
    </location>
</feature>
<feature type="region of interest" description="Disordered" evidence="4">
    <location>
        <begin position="194"/>
        <end position="261"/>
    </location>
</feature>
<feature type="compositionally biased region" description="Polar residues" evidence="4">
    <location>
        <begin position="165"/>
        <end position="181"/>
    </location>
</feature>
<feature type="compositionally biased region" description="Polar residues" evidence="4">
    <location>
        <begin position="225"/>
        <end position="237"/>
    </location>
</feature>
<feature type="compositionally biased region" description="Low complexity" evidence="4">
    <location>
        <begin position="238"/>
        <end position="249"/>
    </location>
</feature>
<feature type="compositionally biased region" description="Polar residues" evidence="4">
    <location>
        <begin position="250"/>
        <end position="261"/>
    </location>
</feature>
<feature type="glycosylation site" description="N-linked (GlcNAc...) asparagine" evidence="2">
    <location>
        <position position="57"/>
    </location>
</feature>
<organism>
    <name type="scientific">Hortaea werneckii</name>
    <dbReference type="NCBI Taxonomy" id="91943"/>
    <lineage>
        <taxon>Eukaryota</taxon>
        <taxon>Fungi</taxon>
        <taxon>Dikarya</taxon>
        <taxon>Ascomycota</taxon>
        <taxon>Pezizomycotina</taxon>
        <taxon>Dothideomycetes</taxon>
        <taxon>Dothideomycetidae</taxon>
        <taxon>Mycosphaerellales</taxon>
        <taxon>Teratosphaeriaceae</taxon>
        <taxon>Hortaea</taxon>
    </lineage>
</organism>
<keyword id="KW-1003">Cell membrane</keyword>
<keyword id="KW-0325">Glycoprotein</keyword>
<keyword id="KW-0472">Membrane</keyword>
<keyword id="KW-0728">SH3 domain</keyword>
<keyword id="KW-0346">Stress response</keyword>
<keyword id="KW-0812">Transmembrane</keyword>
<keyword id="KW-1133">Transmembrane helix</keyword>